<dbReference type="EMBL" id="CP000388">
    <property type="protein sequence ID" value="ABG39001.1"/>
    <property type="molecule type" value="Genomic_DNA"/>
</dbReference>
<dbReference type="RefSeq" id="WP_006992670.1">
    <property type="nucleotide sequence ID" value="NC_008228.1"/>
</dbReference>
<dbReference type="SMR" id="Q15YN7"/>
<dbReference type="STRING" id="342610.Patl_0471"/>
<dbReference type="KEGG" id="pat:Patl_0471"/>
<dbReference type="eggNOG" id="COG0089">
    <property type="taxonomic scope" value="Bacteria"/>
</dbReference>
<dbReference type="HOGENOM" id="CLU_037562_3_1_6"/>
<dbReference type="OrthoDB" id="9793353at2"/>
<dbReference type="Proteomes" id="UP000001981">
    <property type="component" value="Chromosome"/>
</dbReference>
<dbReference type="GO" id="GO:1990904">
    <property type="term" value="C:ribonucleoprotein complex"/>
    <property type="evidence" value="ECO:0007669"/>
    <property type="project" value="UniProtKB-KW"/>
</dbReference>
<dbReference type="GO" id="GO:0005840">
    <property type="term" value="C:ribosome"/>
    <property type="evidence" value="ECO:0007669"/>
    <property type="project" value="UniProtKB-KW"/>
</dbReference>
<dbReference type="GO" id="GO:0019843">
    <property type="term" value="F:rRNA binding"/>
    <property type="evidence" value="ECO:0007669"/>
    <property type="project" value="UniProtKB-UniRule"/>
</dbReference>
<dbReference type="GO" id="GO:0003735">
    <property type="term" value="F:structural constituent of ribosome"/>
    <property type="evidence" value="ECO:0007669"/>
    <property type="project" value="InterPro"/>
</dbReference>
<dbReference type="GO" id="GO:0006412">
    <property type="term" value="P:translation"/>
    <property type="evidence" value="ECO:0007669"/>
    <property type="project" value="UniProtKB-UniRule"/>
</dbReference>
<dbReference type="FunFam" id="3.30.70.330:FF:000001">
    <property type="entry name" value="50S ribosomal protein L23"/>
    <property type="match status" value="1"/>
</dbReference>
<dbReference type="Gene3D" id="3.30.70.330">
    <property type="match status" value="1"/>
</dbReference>
<dbReference type="HAMAP" id="MF_01369_B">
    <property type="entry name" value="Ribosomal_uL23_B"/>
    <property type="match status" value="1"/>
</dbReference>
<dbReference type="InterPro" id="IPR012677">
    <property type="entry name" value="Nucleotide-bd_a/b_plait_sf"/>
</dbReference>
<dbReference type="InterPro" id="IPR013025">
    <property type="entry name" value="Ribosomal_uL23-like"/>
</dbReference>
<dbReference type="InterPro" id="IPR012678">
    <property type="entry name" value="Ribosomal_uL23/eL15/eS24_sf"/>
</dbReference>
<dbReference type="NCBIfam" id="NF004358">
    <property type="entry name" value="PRK05738.1-1"/>
    <property type="match status" value="1"/>
</dbReference>
<dbReference type="NCBIfam" id="NF004359">
    <property type="entry name" value="PRK05738.1-3"/>
    <property type="match status" value="1"/>
</dbReference>
<dbReference type="NCBIfam" id="NF004363">
    <property type="entry name" value="PRK05738.2-4"/>
    <property type="match status" value="1"/>
</dbReference>
<dbReference type="PANTHER" id="PTHR11620">
    <property type="entry name" value="60S RIBOSOMAL PROTEIN L23A"/>
    <property type="match status" value="1"/>
</dbReference>
<dbReference type="Pfam" id="PF00276">
    <property type="entry name" value="Ribosomal_L23"/>
    <property type="match status" value="1"/>
</dbReference>
<dbReference type="SUPFAM" id="SSF54189">
    <property type="entry name" value="Ribosomal proteins S24e, L23 and L15e"/>
    <property type="match status" value="1"/>
</dbReference>
<gene>
    <name evidence="1" type="primary">rplW</name>
    <name type="ordered locus">Patl_0471</name>
</gene>
<proteinExistence type="inferred from homology"/>
<organism>
    <name type="scientific">Pseudoalteromonas atlantica (strain T6c / ATCC BAA-1087)</name>
    <dbReference type="NCBI Taxonomy" id="3042615"/>
    <lineage>
        <taxon>Bacteria</taxon>
        <taxon>Pseudomonadati</taxon>
        <taxon>Pseudomonadota</taxon>
        <taxon>Gammaproteobacteria</taxon>
        <taxon>Alteromonadales</taxon>
        <taxon>Alteromonadaceae</taxon>
        <taxon>Paraglaciecola</taxon>
    </lineage>
</organism>
<evidence type="ECO:0000255" key="1">
    <source>
        <dbReference type="HAMAP-Rule" id="MF_01369"/>
    </source>
</evidence>
<evidence type="ECO:0000305" key="2"/>
<sequence length="100" mass="11124">MINEERLLKVVLAPHVSEKATLAAEVNNTVVFKVLKDANKEEIKAAVEKLFEVEVNSVRTVNVKGKTKRHGASFGKRKDWKKAYVVLKEGQDIDFAGSEG</sequence>
<name>RL23_PSEA6</name>
<feature type="chain" id="PRO_0000272802" description="Large ribosomal subunit protein uL23">
    <location>
        <begin position="1"/>
        <end position="100"/>
    </location>
</feature>
<reference key="1">
    <citation type="submission" date="2006-06" db="EMBL/GenBank/DDBJ databases">
        <title>Complete sequence of Pseudoalteromonas atlantica T6c.</title>
        <authorList>
            <consortium name="US DOE Joint Genome Institute"/>
            <person name="Copeland A."/>
            <person name="Lucas S."/>
            <person name="Lapidus A."/>
            <person name="Barry K."/>
            <person name="Detter J.C."/>
            <person name="Glavina del Rio T."/>
            <person name="Hammon N."/>
            <person name="Israni S."/>
            <person name="Dalin E."/>
            <person name="Tice H."/>
            <person name="Pitluck S."/>
            <person name="Saunders E."/>
            <person name="Brettin T."/>
            <person name="Bruce D."/>
            <person name="Han C."/>
            <person name="Tapia R."/>
            <person name="Gilna P."/>
            <person name="Schmutz J."/>
            <person name="Larimer F."/>
            <person name="Land M."/>
            <person name="Hauser L."/>
            <person name="Kyrpides N."/>
            <person name="Kim E."/>
            <person name="Karls A.C."/>
            <person name="Bartlett D."/>
            <person name="Higgins B.P."/>
            <person name="Richardson P."/>
        </authorList>
    </citation>
    <scope>NUCLEOTIDE SEQUENCE [LARGE SCALE GENOMIC DNA]</scope>
    <source>
        <strain>T6c / ATCC BAA-1087</strain>
    </source>
</reference>
<comment type="function">
    <text evidence="1">One of the early assembly proteins it binds 23S rRNA. One of the proteins that surrounds the polypeptide exit tunnel on the outside of the ribosome. Forms the main docking site for trigger factor binding to the ribosome.</text>
</comment>
<comment type="subunit">
    <text evidence="1">Part of the 50S ribosomal subunit. Contacts protein L29, and trigger factor when it is bound to the ribosome.</text>
</comment>
<comment type="similarity">
    <text evidence="1">Belongs to the universal ribosomal protein uL23 family.</text>
</comment>
<accession>Q15YN7</accession>
<protein>
    <recommendedName>
        <fullName evidence="1">Large ribosomal subunit protein uL23</fullName>
    </recommendedName>
    <alternativeName>
        <fullName evidence="2">50S ribosomal protein L23</fullName>
    </alternativeName>
</protein>
<keyword id="KW-0687">Ribonucleoprotein</keyword>
<keyword id="KW-0689">Ribosomal protein</keyword>
<keyword id="KW-0694">RNA-binding</keyword>
<keyword id="KW-0699">rRNA-binding</keyword>